<accession>Q7XUN2</accession>
<accession>Q9AUJ0</accession>
<accession>Q9SES9</accession>
<gene>
    <name type="primary">MADS17</name>
    <name type="ordered locus">Os04g0580700</name>
    <name type="ordered locus">LOC_Os04g49150</name>
    <name type="ORF">OSJNBa0064M23.11</name>
</gene>
<reference key="1">
    <citation type="journal article" date="1999" name="Plant Physiol.">
        <title>Determination of the motif responsible for interaction between the rice APETALA1/AGAMOUS-LIKE9 family proteins using a yeast two-hybrid system.</title>
        <authorList>
            <person name="Moon Y.-H."/>
            <person name="Kang H.-G."/>
            <person name="Jung J.-Y."/>
            <person name="Jeon J.-S."/>
            <person name="Sung S.-K."/>
            <person name="An G."/>
        </authorList>
    </citation>
    <scope>NUCLEOTIDE SEQUENCE [MRNA]</scope>
    <scope>INTERACTION WITH MADS6</scope>
    <source>
        <tissue>Flower</tissue>
    </source>
</reference>
<reference key="2">
    <citation type="submission" date="2004-02" db="EMBL/GenBank/DDBJ databases">
        <authorList>
            <person name="Yao Q."/>
            <person name="Peng R."/>
            <person name="Xiong A."/>
        </authorList>
    </citation>
    <scope>NUCLEOTIDE SEQUENCE [MRNA]</scope>
</reference>
<reference key="3">
    <citation type="journal article" date="2002" name="Nature">
        <title>Sequence and analysis of rice chromosome 4.</title>
        <authorList>
            <person name="Feng Q."/>
            <person name="Zhang Y."/>
            <person name="Hao P."/>
            <person name="Wang S."/>
            <person name="Fu G."/>
            <person name="Huang Y."/>
            <person name="Li Y."/>
            <person name="Zhu J."/>
            <person name="Liu Y."/>
            <person name="Hu X."/>
            <person name="Jia P."/>
            <person name="Zhang Y."/>
            <person name="Zhao Q."/>
            <person name="Ying K."/>
            <person name="Yu S."/>
            <person name="Tang Y."/>
            <person name="Weng Q."/>
            <person name="Zhang L."/>
            <person name="Lu Y."/>
            <person name="Mu J."/>
            <person name="Lu Y."/>
            <person name="Zhang L.S."/>
            <person name="Yu Z."/>
            <person name="Fan D."/>
            <person name="Liu X."/>
            <person name="Lu T."/>
            <person name="Li C."/>
            <person name="Wu Y."/>
            <person name="Sun T."/>
            <person name="Lei H."/>
            <person name="Li T."/>
            <person name="Hu H."/>
            <person name="Guan J."/>
            <person name="Wu M."/>
            <person name="Zhang R."/>
            <person name="Zhou B."/>
            <person name="Chen Z."/>
            <person name="Chen L."/>
            <person name="Jin Z."/>
            <person name="Wang R."/>
            <person name="Yin H."/>
            <person name="Cai Z."/>
            <person name="Ren S."/>
            <person name="Lv G."/>
            <person name="Gu W."/>
            <person name="Zhu G."/>
            <person name="Tu Y."/>
            <person name="Jia J."/>
            <person name="Zhang Y."/>
            <person name="Chen J."/>
            <person name="Kang H."/>
            <person name="Chen X."/>
            <person name="Shao C."/>
            <person name="Sun Y."/>
            <person name="Hu Q."/>
            <person name="Zhang X."/>
            <person name="Zhang W."/>
            <person name="Wang L."/>
            <person name="Ding C."/>
            <person name="Sheng H."/>
            <person name="Gu J."/>
            <person name="Chen S."/>
            <person name="Ni L."/>
            <person name="Zhu F."/>
            <person name="Chen W."/>
            <person name="Lan L."/>
            <person name="Lai Y."/>
            <person name="Cheng Z."/>
            <person name="Gu M."/>
            <person name="Jiang J."/>
            <person name="Li J."/>
            <person name="Hong G."/>
            <person name="Xue Y."/>
            <person name="Han B."/>
        </authorList>
    </citation>
    <scope>NUCLEOTIDE SEQUENCE [LARGE SCALE GENOMIC DNA]</scope>
    <source>
        <strain>cv. Nipponbare</strain>
    </source>
</reference>
<reference key="4">
    <citation type="journal article" date="2005" name="Nature">
        <title>The map-based sequence of the rice genome.</title>
        <authorList>
            <consortium name="International rice genome sequencing project (IRGSP)"/>
        </authorList>
    </citation>
    <scope>NUCLEOTIDE SEQUENCE [LARGE SCALE GENOMIC DNA]</scope>
    <source>
        <strain>cv. Nipponbare</strain>
    </source>
</reference>
<reference key="5">
    <citation type="journal article" date="2013" name="Rice">
        <title>Improvement of the Oryza sativa Nipponbare reference genome using next generation sequence and optical map data.</title>
        <authorList>
            <person name="Kawahara Y."/>
            <person name="de la Bastide M."/>
            <person name="Hamilton J.P."/>
            <person name="Kanamori H."/>
            <person name="McCombie W.R."/>
            <person name="Ouyang S."/>
            <person name="Schwartz D.C."/>
            <person name="Tanaka T."/>
            <person name="Wu J."/>
            <person name="Zhou S."/>
            <person name="Childs K.L."/>
            <person name="Davidson R.M."/>
            <person name="Lin H."/>
            <person name="Quesada-Ocampo L."/>
            <person name="Vaillancourt B."/>
            <person name="Sakai H."/>
            <person name="Lee S.S."/>
            <person name="Kim J."/>
            <person name="Numa H."/>
            <person name="Itoh T."/>
            <person name="Buell C.R."/>
            <person name="Matsumoto T."/>
        </authorList>
    </citation>
    <scope>GENOME REANNOTATION</scope>
    <source>
        <strain>cv. Nipponbare</strain>
    </source>
</reference>
<reference key="6">
    <citation type="journal article" date="2000" name="Prog. Nat. Sci.">
        <title>Cloning and characterization of two cDNAs encoding rice MADS box protein.</title>
        <authorList>
            <person name="Yuan Z."/>
            <person name="Qian X."/>
            <person name="Liu J."/>
            <person name="Liu J."/>
            <person name="Qian M."/>
            <person name="Yang J."/>
        </authorList>
    </citation>
    <scope>NUCLEOTIDE SEQUENCE [MRNA] OF 8-249</scope>
</reference>
<reference key="7">
    <citation type="journal article" date="2009" name="Plant Cell">
        <title>MOSAIC FLORAL ORGANS1, an AGL6-like MADS box gene, regulates floral organ identity and meristem fate in rice.</title>
        <authorList>
            <person name="Ohmori S."/>
            <person name="Kimizu M."/>
            <person name="Sugita M."/>
            <person name="Miyao A."/>
            <person name="Hirochika H."/>
            <person name="Uchida E."/>
            <person name="Nagato Y."/>
            <person name="Yoshida H."/>
        </authorList>
    </citation>
    <scope>FUNCTION</scope>
    <scope>TISSUE SPECIFICITY</scope>
    <scope>DISRUPTION PHENOTYPE</scope>
</reference>
<comment type="function">
    <text evidence="4">Probable transcription factor. Plays minor but redundant roles with MADS6 in floral development.</text>
</comment>
<comment type="subunit">
    <text>May interact with the K-box of MADS6.</text>
</comment>
<comment type="subcellular location">
    <subcellularLocation>
        <location evidence="5">Nucleus</location>
    </subcellularLocation>
</comment>
<comment type="tissue specificity">
    <text evidence="4">Expressed in the floral meristem, lodicule, palea, lemma, receptacle, empty glume, stamen, pistil, and ovule.</text>
</comment>
<comment type="disruption phenotype">
    <text evidence="4">No visible phenotype, probably due to redundancy with MADS6.</text>
</comment>
<comment type="sequence caution" evidence="5">
    <conflict type="frameshift">
        <sequence resource="EMBL-CDS" id="AAK26241"/>
    </conflict>
</comment>
<feature type="chain" id="PRO_0000229901" description="MADS-box transcription factor 17">
    <location>
        <begin position="1"/>
        <end position="249"/>
    </location>
</feature>
<feature type="domain" description="MADS-box" evidence="1">
    <location>
        <begin position="1"/>
        <end position="61"/>
    </location>
</feature>
<feature type="domain" description="K-box" evidence="2">
    <location>
        <begin position="88"/>
        <end position="178"/>
    </location>
</feature>
<feature type="region of interest" description="Disordered" evidence="3">
    <location>
        <begin position="228"/>
        <end position="249"/>
    </location>
</feature>
<feature type="sequence conflict" description="In Ref. 6; AAK26241." evidence="5" ref="6">
    <original>LKR</original>
    <variation>IKS</variation>
    <location>
        <begin position="8"/>
        <end position="10"/>
    </location>
</feature>
<feature type="sequence conflict" description="In Ref. 6; AAK26241." evidence="5" ref="6">
    <original>N</original>
    <variation>T</variation>
    <location>
        <position position="16"/>
    </location>
</feature>
<name>MAD17_ORYSJ</name>
<organism>
    <name type="scientific">Oryza sativa subsp. japonica</name>
    <name type="common">Rice</name>
    <dbReference type="NCBI Taxonomy" id="39947"/>
    <lineage>
        <taxon>Eukaryota</taxon>
        <taxon>Viridiplantae</taxon>
        <taxon>Streptophyta</taxon>
        <taxon>Embryophyta</taxon>
        <taxon>Tracheophyta</taxon>
        <taxon>Spermatophyta</taxon>
        <taxon>Magnoliopsida</taxon>
        <taxon>Liliopsida</taxon>
        <taxon>Poales</taxon>
        <taxon>Poaceae</taxon>
        <taxon>BOP clade</taxon>
        <taxon>Oryzoideae</taxon>
        <taxon>Oryzeae</taxon>
        <taxon>Oryzinae</taxon>
        <taxon>Oryza</taxon>
        <taxon>Oryza sativa</taxon>
    </lineage>
</organism>
<protein>
    <recommendedName>
        <fullName>MADS-box transcription factor 17</fullName>
    </recommendedName>
    <alternativeName>
        <fullName>NMADS3</fullName>
    </alternativeName>
    <alternativeName>
        <fullName>OsMADS17</fullName>
    </alternativeName>
    <alternativeName>
        <fullName>RMADS213</fullName>
    </alternativeName>
</protein>
<keyword id="KW-0238">DNA-binding</keyword>
<keyword id="KW-0539">Nucleus</keyword>
<keyword id="KW-1185">Reference proteome</keyword>
<keyword id="KW-0804">Transcription</keyword>
<keyword id="KW-0805">Transcription regulation</keyword>
<proteinExistence type="evidence at protein level"/>
<sequence>MGRGRVELKRIENKINRQVTFSKRRNGLLKKAYELSVLCDAEVALIIFSSRGKLYEFGSAGINKTLEKYNSCCYNAQGSNSALAGGEHQSWYQEMSRLKTKLECLQRSQRHMLGEDLGPLSIKELQQLEKQLEYSLSQARQRKTQIMMEQVDDLRRKERQLGELNKQLKNKLEAEADSSNCRSAIQDSWVHGTVVSGGRVLNAQPPPDIDCEPTLQIGYYQFVRPEAANPRSNGGGGDQNNNFVMGWPL</sequence>
<evidence type="ECO:0000255" key="1">
    <source>
        <dbReference type="PROSITE-ProRule" id="PRU00251"/>
    </source>
</evidence>
<evidence type="ECO:0000255" key="2">
    <source>
        <dbReference type="PROSITE-ProRule" id="PRU00629"/>
    </source>
</evidence>
<evidence type="ECO:0000256" key="3">
    <source>
        <dbReference type="SAM" id="MobiDB-lite"/>
    </source>
</evidence>
<evidence type="ECO:0000269" key="4">
    <source>
    </source>
</evidence>
<evidence type="ECO:0000305" key="5"/>
<dbReference type="EMBL" id="AF109153">
    <property type="protein sequence ID" value="AAF21900.1"/>
    <property type="molecule type" value="mRNA"/>
</dbReference>
<dbReference type="EMBL" id="AY551918">
    <property type="protein sequence ID" value="AAS59824.1"/>
    <property type="molecule type" value="mRNA"/>
</dbReference>
<dbReference type="EMBL" id="AL606688">
    <property type="protein sequence ID" value="CAD41166.2"/>
    <property type="molecule type" value="Genomic_DNA"/>
</dbReference>
<dbReference type="EMBL" id="AP014960">
    <property type="status" value="NOT_ANNOTATED_CDS"/>
    <property type="molecule type" value="Genomic_DNA"/>
</dbReference>
<dbReference type="EMBL" id="AF095646">
    <property type="protein sequence ID" value="AAK26241.1"/>
    <property type="status" value="ALT_FRAME"/>
    <property type="molecule type" value="mRNA"/>
</dbReference>
<dbReference type="SMR" id="Q7XUN2"/>
<dbReference type="FunCoup" id="Q7XUN2">
    <property type="interactions" value="43"/>
</dbReference>
<dbReference type="IntAct" id="Q7XUN2">
    <property type="interactions" value="3"/>
</dbReference>
<dbReference type="STRING" id="39947.Q7XUN2"/>
<dbReference type="PaxDb" id="39947-Q7XUN2"/>
<dbReference type="eggNOG" id="KOG0014">
    <property type="taxonomic scope" value="Eukaryota"/>
</dbReference>
<dbReference type="InParanoid" id="Q7XUN2"/>
<dbReference type="Proteomes" id="UP000000763">
    <property type="component" value="Chromosome 4"/>
</dbReference>
<dbReference type="Proteomes" id="UP000059680">
    <property type="component" value="Chromosome 4"/>
</dbReference>
<dbReference type="GO" id="GO:0005634">
    <property type="term" value="C:nucleus"/>
    <property type="evidence" value="ECO:0007669"/>
    <property type="project" value="UniProtKB-SubCell"/>
</dbReference>
<dbReference type="GO" id="GO:0000981">
    <property type="term" value="F:DNA-binding transcription factor activity, RNA polymerase II-specific"/>
    <property type="evidence" value="ECO:0000318"/>
    <property type="project" value="GO_Central"/>
</dbReference>
<dbReference type="GO" id="GO:0046983">
    <property type="term" value="F:protein dimerization activity"/>
    <property type="evidence" value="ECO:0007669"/>
    <property type="project" value="InterPro"/>
</dbReference>
<dbReference type="GO" id="GO:0000978">
    <property type="term" value="F:RNA polymerase II cis-regulatory region sequence-specific DNA binding"/>
    <property type="evidence" value="ECO:0000318"/>
    <property type="project" value="GO_Central"/>
</dbReference>
<dbReference type="GO" id="GO:0045944">
    <property type="term" value="P:positive regulation of transcription by RNA polymerase II"/>
    <property type="evidence" value="ECO:0007669"/>
    <property type="project" value="InterPro"/>
</dbReference>
<dbReference type="GO" id="GO:0006357">
    <property type="term" value="P:regulation of transcription by RNA polymerase II"/>
    <property type="evidence" value="ECO:0000318"/>
    <property type="project" value="GO_Central"/>
</dbReference>
<dbReference type="GO" id="GO:0010093">
    <property type="term" value="P:specification of floral organ identity"/>
    <property type="evidence" value="ECO:0000315"/>
    <property type="project" value="UniProtKB"/>
</dbReference>
<dbReference type="CDD" id="cd00265">
    <property type="entry name" value="MADS_MEF2_like"/>
    <property type="match status" value="1"/>
</dbReference>
<dbReference type="FunFam" id="3.40.1810.10:FF:000004">
    <property type="entry name" value="MADS-box transcription factor 1"/>
    <property type="match status" value="1"/>
</dbReference>
<dbReference type="Gene3D" id="3.40.1810.10">
    <property type="entry name" value="Transcription factor, MADS-box"/>
    <property type="match status" value="1"/>
</dbReference>
<dbReference type="InterPro" id="IPR050142">
    <property type="entry name" value="MADS-box/MEF2_TF"/>
</dbReference>
<dbReference type="InterPro" id="IPR033896">
    <property type="entry name" value="MEF2-like_N"/>
</dbReference>
<dbReference type="InterPro" id="IPR002487">
    <property type="entry name" value="TF_Kbox"/>
</dbReference>
<dbReference type="InterPro" id="IPR002100">
    <property type="entry name" value="TF_MADSbox"/>
</dbReference>
<dbReference type="InterPro" id="IPR036879">
    <property type="entry name" value="TF_MADSbox_sf"/>
</dbReference>
<dbReference type="PANTHER" id="PTHR48019">
    <property type="entry name" value="SERUM RESPONSE FACTOR HOMOLOG"/>
    <property type="match status" value="1"/>
</dbReference>
<dbReference type="Pfam" id="PF01486">
    <property type="entry name" value="K-box"/>
    <property type="match status" value="1"/>
</dbReference>
<dbReference type="Pfam" id="PF00319">
    <property type="entry name" value="SRF-TF"/>
    <property type="match status" value="1"/>
</dbReference>
<dbReference type="PRINTS" id="PR00404">
    <property type="entry name" value="MADSDOMAIN"/>
</dbReference>
<dbReference type="SMART" id="SM00432">
    <property type="entry name" value="MADS"/>
    <property type="match status" value="1"/>
</dbReference>
<dbReference type="SUPFAM" id="SSF55455">
    <property type="entry name" value="SRF-like"/>
    <property type="match status" value="1"/>
</dbReference>
<dbReference type="PROSITE" id="PS51297">
    <property type="entry name" value="K_BOX"/>
    <property type="match status" value="1"/>
</dbReference>
<dbReference type="PROSITE" id="PS00350">
    <property type="entry name" value="MADS_BOX_1"/>
    <property type="match status" value="1"/>
</dbReference>
<dbReference type="PROSITE" id="PS50066">
    <property type="entry name" value="MADS_BOX_2"/>
    <property type="match status" value="1"/>
</dbReference>